<comment type="function">
    <text evidence="1">May be involved in cellular response to stress. Required to maintain mitochondrial DNA (mtDNA) integrity and stability (By similarity).</text>
</comment>
<comment type="subcellular location">
    <subcellularLocation>
        <location evidence="1">Mitochondrion inner membrane</location>
        <topology evidence="1">Multi-pass membrane protein</topology>
    </subcellularLocation>
</comment>
<comment type="similarity">
    <text evidence="3">Belongs to the peroxisomal membrane protein PXMP2/4 family.</text>
</comment>
<evidence type="ECO:0000250" key="1"/>
<evidence type="ECO:0000255" key="2"/>
<evidence type="ECO:0000305" key="3"/>
<sequence length="182" mass="20670">MSSFFKFYKASLQSHPKRTNALTTGFLFGLGDIVAQTQFPEPGASYDPMRTLRPFLYGAVLFSLVGDKWYRFLSTVRLGRLPQAHWANVLARVACDQLIFAPIGVPLYYTAMALMEGGSLEDVRIRLSEKWWSTLLANWIVWPAFQLCNFSLVPVQHRLLTVNVLSIFWNTYLSYSNSTASS</sequence>
<reference key="1">
    <citation type="journal article" date="2004" name="Science">
        <title>The Ashbya gossypii genome as a tool for mapping the ancient Saccharomyces cerevisiae genome.</title>
        <authorList>
            <person name="Dietrich F.S."/>
            <person name="Voegeli S."/>
            <person name="Brachat S."/>
            <person name="Lerch A."/>
            <person name="Gates K."/>
            <person name="Steiner S."/>
            <person name="Mohr C."/>
            <person name="Poehlmann R."/>
            <person name="Luedi P."/>
            <person name="Choi S."/>
            <person name="Wing R.A."/>
            <person name="Flavier A."/>
            <person name="Gaffney T.D."/>
            <person name="Philippsen P."/>
        </authorList>
    </citation>
    <scope>NUCLEOTIDE SEQUENCE [LARGE SCALE GENOMIC DNA]</scope>
    <source>
        <strain>ATCC 10895 / CBS 109.51 / FGSC 9923 / NRRL Y-1056</strain>
    </source>
</reference>
<reference key="2">
    <citation type="journal article" date="2013" name="G3 (Bethesda)">
        <title>Genomes of Ashbya fungi isolated from insects reveal four mating-type loci, numerous translocations, lack of transposons, and distinct gene duplications.</title>
        <authorList>
            <person name="Dietrich F.S."/>
            <person name="Voegeli S."/>
            <person name="Kuo S."/>
            <person name="Philippsen P."/>
        </authorList>
    </citation>
    <scope>GENOME REANNOTATION</scope>
    <source>
        <strain>ATCC 10895 / CBS 109.51 / FGSC 9923 / NRRL Y-1056</strain>
    </source>
</reference>
<proteinExistence type="inferred from homology"/>
<keyword id="KW-0472">Membrane</keyword>
<keyword id="KW-0496">Mitochondrion</keyword>
<keyword id="KW-0999">Mitochondrion inner membrane</keyword>
<keyword id="KW-1185">Reference proteome</keyword>
<keyword id="KW-0812">Transmembrane</keyword>
<keyword id="KW-1133">Transmembrane helix</keyword>
<gene>
    <name type="primary">SYM1</name>
    <name type="ordered locus">AFR120C</name>
</gene>
<dbReference type="EMBL" id="AE016819">
    <property type="protein sequence ID" value="AAS53491.1"/>
    <property type="molecule type" value="Genomic_DNA"/>
</dbReference>
<dbReference type="RefSeq" id="NP_985667.1">
    <property type="nucleotide sequence ID" value="NM_211021.1"/>
</dbReference>
<dbReference type="FunCoup" id="Q754F0">
    <property type="interactions" value="582"/>
</dbReference>
<dbReference type="STRING" id="284811.Q754F0"/>
<dbReference type="EnsemblFungi" id="AAS53491">
    <property type="protein sequence ID" value="AAS53491"/>
    <property type="gene ID" value="AGOS_AFR120C"/>
</dbReference>
<dbReference type="GeneID" id="4621914"/>
<dbReference type="KEGG" id="ago:AGOS_AFR120C"/>
<dbReference type="eggNOG" id="KOG1944">
    <property type="taxonomic scope" value="Eukaryota"/>
</dbReference>
<dbReference type="HOGENOM" id="CLU_049109_8_1_1"/>
<dbReference type="InParanoid" id="Q754F0"/>
<dbReference type="OMA" id="CAPTMIG"/>
<dbReference type="OrthoDB" id="430207at2759"/>
<dbReference type="Proteomes" id="UP000000591">
    <property type="component" value="Chromosome VI"/>
</dbReference>
<dbReference type="GO" id="GO:0005737">
    <property type="term" value="C:cytoplasm"/>
    <property type="evidence" value="ECO:0000318"/>
    <property type="project" value="GO_Central"/>
</dbReference>
<dbReference type="GO" id="GO:0005743">
    <property type="term" value="C:mitochondrial inner membrane"/>
    <property type="evidence" value="ECO:0007669"/>
    <property type="project" value="UniProtKB-SubCell"/>
</dbReference>
<dbReference type="GO" id="GO:0005739">
    <property type="term" value="C:mitochondrion"/>
    <property type="evidence" value="ECO:0000318"/>
    <property type="project" value="GO_Central"/>
</dbReference>
<dbReference type="InterPro" id="IPR007248">
    <property type="entry name" value="Mpv17_PMP22"/>
</dbReference>
<dbReference type="PANTHER" id="PTHR11266">
    <property type="entry name" value="PEROXISOMAL MEMBRANE PROTEIN 2, PXMP2 MPV17"/>
    <property type="match status" value="1"/>
</dbReference>
<dbReference type="PANTHER" id="PTHR11266:SF17">
    <property type="entry name" value="PROTEIN MPV17"/>
    <property type="match status" value="1"/>
</dbReference>
<dbReference type="Pfam" id="PF04117">
    <property type="entry name" value="Mpv17_PMP22"/>
    <property type="match status" value="1"/>
</dbReference>
<name>SYM1_EREGS</name>
<accession>Q754F0</accession>
<feature type="chain" id="PRO_0000234405" description="Protein SYM1">
    <location>
        <begin position="1"/>
        <end position="182"/>
    </location>
</feature>
<feature type="transmembrane region" description="Helical" evidence="2">
    <location>
        <begin position="51"/>
        <end position="70"/>
    </location>
</feature>
<feature type="transmembrane region" description="Helical" evidence="2">
    <location>
        <begin position="98"/>
        <end position="118"/>
    </location>
</feature>
<feature type="transmembrane region" description="Helical" evidence="2">
    <location>
        <begin position="135"/>
        <end position="155"/>
    </location>
</feature>
<protein>
    <recommendedName>
        <fullName>Protein SYM1</fullName>
    </recommendedName>
</protein>
<organism>
    <name type="scientific">Eremothecium gossypii (strain ATCC 10895 / CBS 109.51 / FGSC 9923 / NRRL Y-1056)</name>
    <name type="common">Yeast</name>
    <name type="synonym">Ashbya gossypii</name>
    <dbReference type="NCBI Taxonomy" id="284811"/>
    <lineage>
        <taxon>Eukaryota</taxon>
        <taxon>Fungi</taxon>
        <taxon>Dikarya</taxon>
        <taxon>Ascomycota</taxon>
        <taxon>Saccharomycotina</taxon>
        <taxon>Saccharomycetes</taxon>
        <taxon>Saccharomycetales</taxon>
        <taxon>Saccharomycetaceae</taxon>
        <taxon>Eremothecium</taxon>
    </lineage>
</organism>